<keyword id="KW-0012">Acyltransferase</keyword>
<keyword id="KW-0133">Cell shape</keyword>
<keyword id="KW-0961">Cell wall biogenesis/degradation</keyword>
<keyword id="KW-0963">Cytoplasm</keyword>
<keyword id="KW-0460">Magnesium</keyword>
<keyword id="KW-0479">Metal-binding</keyword>
<keyword id="KW-0511">Multifunctional enzyme</keyword>
<keyword id="KW-0548">Nucleotidyltransferase</keyword>
<keyword id="KW-0573">Peptidoglycan synthesis</keyword>
<keyword id="KW-0677">Repeat</keyword>
<keyword id="KW-0808">Transferase</keyword>
<organism>
    <name type="scientific">Shewanella baltica (strain OS185)</name>
    <dbReference type="NCBI Taxonomy" id="402882"/>
    <lineage>
        <taxon>Bacteria</taxon>
        <taxon>Pseudomonadati</taxon>
        <taxon>Pseudomonadota</taxon>
        <taxon>Gammaproteobacteria</taxon>
        <taxon>Alteromonadales</taxon>
        <taxon>Shewanellaceae</taxon>
        <taxon>Shewanella</taxon>
    </lineage>
</organism>
<sequence length="460" mass="48712">MALNVVILAAGKGTRMRSDLPKVLHPIAHKSMVQHVIDTAHKVGSDAIQLVYGYGADKLQASLGEQQLNWVLQAEQLGTGHAVAQASPHIADNDTVLILYGDVPLIQQSTLEALLAALPENGVAILTVNLADPMGYGRIVRTPCKGQEQGKVVGIIEQKDATAEQLLINEINTGIMAVPGKQLKIWLSRLSNNNAQGEYYLTDIIAMAHADGVAIDTAQPQSAIEVEGANNRVQLAQLERAYQAREAEKLMLAGANLRDPSRIDIRGDVTVGMDVMIDINVIFEGKVTLGNNVTIGAGAILIDCEIADNAEIKPYSIIEGAKLGVAASAGPFARLRPGAELKQDAHIGNFVEVKKAVIGVGSKAGHLAYLGDAVIGDGVNIGAGTITCNYDGANKHLTVIEDNVFVGSDTQLVAPVTISKGATLGAGSTITRDVGENELVITRVKQKHLTGWQRPVKIKK</sequence>
<proteinExistence type="inferred from homology"/>
<reference key="1">
    <citation type="submission" date="2007-07" db="EMBL/GenBank/DDBJ databases">
        <title>Complete sequence of chromosome of Shewanella baltica OS185.</title>
        <authorList>
            <consortium name="US DOE Joint Genome Institute"/>
            <person name="Copeland A."/>
            <person name="Lucas S."/>
            <person name="Lapidus A."/>
            <person name="Barry K."/>
            <person name="Glavina del Rio T."/>
            <person name="Dalin E."/>
            <person name="Tice H."/>
            <person name="Pitluck S."/>
            <person name="Sims D."/>
            <person name="Brettin T."/>
            <person name="Bruce D."/>
            <person name="Detter J.C."/>
            <person name="Han C."/>
            <person name="Schmutz J."/>
            <person name="Larimer F."/>
            <person name="Land M."/>
            <person name="Hauser L."/>
            <person name="Kyrpides N."/>
            <person name="Mikhailova N."/>
            <person name="Brettar I."/>
            <person name="Rodrigues J."/>
            <person name="Konstantinidis K."/>
            <person name="Tiedje J."/>
            <person name="Richardson P."/>
        </authorList>
    </citation>
    <scope>NUCLEOTIDE SEQUENCE [LARGE SCALE GENOMIC DNA]</scope>
    <source>
        <strain>OS185</strain>
    </source>
</reference>
<accession>A6WUI8</accession>
<protein>
    <recommendedName>
        <fullName evidence="1">Bifunctional protein GlmU</fullName>
    </recommendedName>
    <domain>
        <recommendedName>
            <fullName evidence="1">UDP-N-acetylglucosamine pyrophosphorylase</fullName>
            <ecNumber evidence="1">2.7.7.23</ecNumber>
        </recommendedName>
        <alternativeName>
            <fullName evidence="1">N-acetylglucosamine-1-phosphate uridyltransferase</fullName>
        </alternativeName>
    </domain>
    <domain>
        <recommendedName>
            <fullName evidence="1">Glucosamine-1-phosphate N-acetyltransferase</fullName>
            <ecNumber evidence="1">2.3.1.157</ecNumber>
        </recommendedName>
    </domain>
</protein>
<evidence type="ECO:0000255" key="1">
    <source>
        <dbReference type="HAMAP-Rule" id="MF_01631"/>
    </source>
</evidence>
<feature type="chain" id="PRO_1000056196" description="Bifunctional protein GlmU">
    <location>
        <begin position="1"/>
        <end position="460"/>
    </location>
</feature>
<feature type="region of interest" description="Pyrophosphorylase" evidence="1">
    <location>
        <begin position="1"/>
        <end position="232"/>
    </location>
</feature>
<feature type="region of interest" description="Linker" evidence="1">
    <location>
        <begin position="233"/>
        <end position="253"/>
    </location>
</feature>
<feature type="region of interest" description="N-acetyltransferase" evidence="1">
    <location>
        <begin position="254"/>
        <end position="460"/>
    </location>
</feature>
<feature type="active site" description="Proton acceptor" evidence="1">
    <location>
        <position position="366"/>
    </location>
</feature>
<feature type="binding site" evidence="1">
    <location>
        <begin position="8"/>
        <end position="11"/>
    </location>
    <ligand>
        <name>UDP-N-acetyl-alpha-D-glucosamine</name>
        <dbReference type="ChEBI" id="CHEBI:57705"/>
    </ligand>
</feature>
<feature type="binding site" evidence="1">
    <location>
        <position position="22"/>
    </location>
    <ligand>
        <name>UDP-N-acetyl-alpha-D-glucosamine</name>
        <dbReference type="ChEBI" id="CHEBI:57705"/>
    </ligand>
</feature>
<feature type="binding site" evidence="1">
    <location>
        <position position="73"/>
    </location>
    <ligand>
        <name>UDP-N-acetyl-alpha-D-glucosamine</name>
        <dbReference type="ChEBI" id="CHEBI:57705"/>
    </ligand>
</feature>
<feature type="binding site" evidence="1">
    <location>
        <begin position="78"/>
        <end position="79"/>
    </location>
    <ligand>
        <name>UDP-N-acetyl-alpha-D-glucosamine</name>
        <dbReference type="ChEBI" id="CHEBI:57705"/>
    </ligand>
</feature>
<feature type="binding site" evidence="1">
    <location>
        <begin position="100"/>
        <end position="102"/>
    </location>
    <ligand>
        <name>UDP-N-acetyl-alpha-D-glucosamine</name>
        <dbReference type="ChEBI" id="CHEBI:57705"/>
    </ligand>
</feature>
<feature type="binding site" evidence="1">
    <location>
        <position position="102"/>
    </location>
    <ligand>
        <name>Mg(2+)</name>
        <dbReference type="ChEBI" id="CHEBI:18420"/>
    </ligand>
</feature>
<feature type="binding site" evidence="1">
    <location>
        <position position="137"/>
    </location>
    <ligand>
        <name>UDP-N-acetyl-alpha-D-glucosamine</name>
        <dbReference type="ChEBI" id="CHEBI:57705"/>
    </ligand>
</feature>
<feature type="binding site" evidence="1">
    <location>
        <position position="157"/>
    </location>
    <ligand>
        <name>UDP-N-acetyl-alpha-D-glucosamine</name>
        <dbReference type="ChEBI" id="CHEBI:57705"/>
    </ligand>
</feature>
<feature type="binding site" evidence="1">
    <location>
        <position position="172"/>
    </location>
    <ligand>
        <name>UDP-N-acetyl-alpha-D-glucosamine</name>
        <dbReference type="ChEBI" id="CHEBI:57705"/>
    </ligand>
</feature>
<feature type="binding site" evidence="1">
    <location>
        <position position="230"/>
    </location>
    <ligand>
        <name>Mg(2+)</name>
        <dbReference type="ChEBI" id="CHEBI:18420"/>
    </ligand>
</feature>
<feature type="binding site" evidence="1">
    <location>
        <position position="230"/>
    </location>
    <ligand>
        <name>UDP-N-acetyl-alpha-D-glucosamine</name>
        <dbReference type="ChEBI" id="CHEBI:57705"/>
    </ligand>
</feature>
<feature type="binding site" evidence="1">
    <location>
        <position position="336"/>
    </location>
    <ligand>
        <name>UDP-N-acetyl-alpha-D-glucosamine</name>
        <dbReference type="ChEBI" id="CHEBI:57705"/>
    </ligand>
</feature>
<feature type="binding site" evidence="1">
    <location>
        <position position="354"/>
    </location>
    <ligand>
        <name>UDP-N-acetyl-alpha-D-glucosamine</name>
        <dbReference type="ChEBI" id="CHEBI:57705"/>
    </ligand>
</feature>
<feature type="binding site" evidence="1">
    <location>
        <position position="369"/>
    </location>
    <ligand>
        <name>UDP-N-acetyl-alpha-D-glucosamine</name>
        <dbReference type="ChEBI" id="CHEBI:57705"/>
    </ligand>
</feature>
<feature type="binding site" evidence="1">
    <location>
        <position position="380"/>
    </location>
    <ligand>
        <name>UDP-N-acetyl-alpha-D-glucosamine</name>
        <dbReference type="ChEBI" id="CHEBI:57705"/>
    </ligand>
</feature>
<feature type="binding site" evidence="1">
    <location>
        <position position="383"/>
    </location>
    <ligand>
        <name>acetyl-CoA</name>
        <dbReference type="ChEBI" id="CHEBI:57288"/>
    </ligand>
</feature>
<feature type="binding site" evidence="1">
    <location>
        <begin position="389"/>
        <end position="390"/>
    </location>
    <ligand>
        <name>acetyl-CoA</name>
        <dbReference type="ChEBI" id="CHEBI:57288"/>
    </ligand>
</feature>
<feature type="binding site" evidence="1">
    <location>
        <position position="408"/>
    </location>
    <ligand>
        <name>acetyl-CoA</name>
        <dbReference type="ChEBI" id="CHEBI:57288"/>
    </ligand>
</feature>
<feature type="binding site" evidence="1">
    <location>
        <position position="426"/>
    </location>
    <ligand>
        <name>acetyl-CoA</name>
        <dbReference type="ChEBI" id="CHEBI:57288"/>
    </ligand>
</feature>
<feature type="binding site" evidence="1">
    <location>
        <position position="443"/>
    </location>
    <ligand>
        <name>acetyl-CoA</name>
        <dbReference type="ChEBI" id="CHEBI:57288"/>
    </ligand>
</feature>
<gene>
    <name evidence="1" type="primary">glmU</name>
    <name type="ordered locus">Shew185_4363</name>
</gene>
<dbReference type="EC" id="2.7.7.23" evidence="1"/>
<dbReference type="EC" id="2.3.1.157" evidence="1"/>
<dbReference type="EMBL" id="CP000753">
    <property type="protein sequence ID" value="ABS10477.1"/>
    <property type="molecule type" value="Genomic_DNA"/>
</dbReference>
<dbReference type="RefSeq" id="WP_012090672.1">
    <property type="nucleotide sequence ID" value="NC_009665.1"/>
</dbReference>
<dbReference type="SMR" id="A6WUI8"/>
<dbReference type="KEGG" id="sbm:Shew185_4363"/>
<dbReference type="HOGENOM" id="CLU_029499_15_2_6"/>
<dbReference type="UniPathway" id="UPA00113">
    <property type="reaction ID" value="UER00532"/>
</dbReference>
<dbReference type="UniPathway" id="UPA00113">
    <property type="reaction ID" value="UER00533"/>
</dbReference>
<dbReference type="UniPathway" id="UPA00973"/>
<dbReference type="GO" id="GO:0005737">
    <property type="term" value="C:cytoplasm"/>
    <property type="evidence" value="ECO:0007669"/>
    <property type="project" value="UniProtKB-SubCell"/>
</dbReference>
<dbReference type="GO" id="GO:0016020">
    <property type="term" value="C:membrane"/>
    <property type="evidence" value="ECO:0007669"/>
    <property type="project" value="GOC"/>
</dbReference>
<dbReference type="GO" id="GO:0019134">
    <property type="term" value="F:glucosamine-1-phosphate N-acetyltransferase activity"/>
    <property type="evidence" value="ECO:0007669"/>
    <property type="project" value="UniProtKB-UniRule"/>
</dbReference>
<dbReference type="GO" id="GO:0000287">
    <property type="term" value="F:magnesium ion binding"/>
    <property type="evidence" value="ECO:0007669"/>
    <property type="project" value="UniProtKB-UniRule"/>
</dbReference>
<dbReference type="GO" id="GO:0003977">
    <property type="term" value="F:UDP-N-acetylglucosamine diphosphorylase activity"/>
    <property type="evidence" value="ECO:0007669"/>
    <property type="project" value="UniProtKB-UniRule"/>
</dbReference>
<dbReference type="GO" id="GO:0000902">
    <property type="term" value="P:cell morphogenesis"/>
    <property type="evidence" value="ECO:0007669"/>
    <property type="project" value="UniProtKB-UniRule"/>
</dbReference>
<dbReference type="GO" id="GO:0071555">
    <property type="term" value="P:cell wall organization"/>
    <property type="evidence" value="ECO:0007669"/>
    <property type="project" value="UniProtKB-KW"/>
</dbReference>
<dbReference type="GO" id="GO:0009245">
    <property type="term" value="P:lipid A biosynthetic process"/>
    <property type="evidence" value="ECO:0007669"/>
    <property type="project" value="UniProtKB-UniRule"/>
</dbReference>
<dbReference type="GO" id="GO:0009252">
    <property type="term" value="P:peptidoglycan biosynthetic process"/>
    <property type="evidence" value="ECO:0007669"/>
    <property type="project" value="UniProtKB-UniRule"/>
</dbReference>
<dbReference type="GO" id="GO:0008360">
    <property type="term" value="P:regulation of cell shape"/>
    <property type="evidence" value="ECO:0007669"/>
    <property type="project" value="UniProtKB-KW"/>
</dbReference>
<dbReference type="GO" id="GO:0006048">
    <property type="term" value="P:UDP-N-acetylglucosamine biosynthetic process"/>
    <property type="evidence" value="ECO:0007669"/>
    <property type="project" value="UniProtKB-UniPathway"/>
</dbReference>
<dbReference type="CDD" id="cd02540">
    <property type="entry name" value="GT2_GlmU_N_bac"/>
    <property type="match status" value="1"/>
</dbReference>
<dbReference type="CDD" id="cd03353">
    <property type="entry name" value="LbH_GlmU_C"/>
    <property type="match status" value="1"/>
</dbReference>
<dbReference type="Gene3D" id="2.160.10.10">
    <property type="entry name" value="Hexapeptide repeat proteins"/>
    <property type="match status" value="1"/>
</dbReference>
<dbReference type="Gene3D" id="3.90.550.10">
    <property type="entry name" value="Spore Coat Polysaccharide Biosynthesis Protein SpsA, Chain A"/>
    <property type="match status" value="1"/>
</dbReference>
<dbReference type="HAMAP" id="MF_01631">
    <property type="entry name" value="GlmU"/>
    <property type="match status" value="1"/>
</dbReference>
<dbReference type="InterPro" id="IPR005882">
    <property type="entry name" value="Bifunctional_GlmU"/>
</dbReference>
<dbReference type="InterPro" id="IPR050065">
    <property type="entry name" value="GlmU-like"/>
</dbReference>
<dbReference type="InterPro" id="IPR038009">
    <property type="entry name" value="GlmU_C_LbH"/>
</dbReference>
<dbReference type="InterPro" id="IPR001451">
    <property type="entry name" value="Hexapep"/>
</dbReference>
<dbReference type="InterPro" id="IPR025877">
    <property type="entry name" value="MobA-like_NTP_Trfase"/>
</dbReference>
<dbReference type="InterPro" id="IPR029044">
    <property type="entry name" value="Nucleotide-diphossugar_trans"/>
</dbReference>
<dbReference type="InterPro" id="IPR011004">
    <property type="entry name" value="Trimer_LpxA-like_sf"/>
</dbReference>
<dbReference type="NCBIfam" id="TIGR01173">
    <property type="entry name" value="glmU"/>
    <property type="match status" value="1"/>
</dbReference>
<dbReference type="NCBIfam" id="NF006986">
    <property type="entry name" value="PRK09451.1"/>
    <property type="match status" value="1"/>
</dbReference>
<dbReference type="PANTHER" id="PTHR43584:SF3">
    <property type="entry name" value="BIFUNCTIONAL PROTEIN GLMU"/>
    <property type="match status" value="1"/>
</dbReference>
<dbReference type="PANTHER" id="PTHR43584">
    <property type="entry name" value="NUCLEOTIDYL TRANSFERASE"/>
    <property type="match status" value="1"/>
</dbReference>
<dbReference type="Pfam" id="PF00132">
    <property type="entry name" value="Hexapep"/>
    <property type="match status" value="2"/>
</dbReference>
<dbReference type="Pfam" id="PF12804">
    <property type="entry name" value="NTP_transf_3"/>
    <property type="match status" value="1"/>
</dbReference>
<dbReference type="SUPFAM" id="SSF53448">
    <property type="entry name" value="Nucleotide-diphospho-sugar transferases"/>
    <property type="match status" value="1"/>
</dbReference>
<dbReference type="SUPFAM" id="SSF51161">
    <property type="entry name" value="Trimeric LpxA-like enzymes"/>
    <property type="match status" value="1"/>
</dbReference>
<comment type="function">
    <text evidence="1">Catalyzes the last two sequential reactions in the de novo biosynthetic pathway for UDP-N-acetylglucosamine (UDP-GlcNAc). The C-terminal domain catalyzes the transfer of acetyl group from acetyl coenzyme A to glucosamine-1-phosphate (GlcN-1-P) to produce N-acetylglucosamine-1-phosphate (GlcNAc-1-P), which is converted into UDP-GlcNAc by the transfer of uridine 5-monophosphate (from uridine 5-triphosphate), a reaction catalyzed by the N-terminal domain.</text>
</comment>
<comment type="catalytic activity">
    <reaction evidence="1">
        <text>alpha-D-glucosamine 1-phosphate + acetyl-CoA = N-acetyl-alpha-D-glucosamine 1-phosphate + CoA + H(+)</text>
        <dbReference type="Rhea" id="RHEA:13725"/>
        <dbReference type="ChEBI" id="CHEBI:15378"/>
        <dbReference type="ChEBI" id="CHEBI:57287"/>
        <dbReference type="ChEBI" id="CHEBI:57288"/>
        <dbReference type="ChEBI" id="CHEBI:57776"/>
        <dbReference type="ChEBI" id="CHEBI:58516"/>
        <dbReference type="EC" id="2.3.1.157"/>
    </reaction>
</comment>
<comment type="catalytic activity">
    <reaction evidence="1">
        <text>N-acetyl-alpha-D-glucosamine 1-phosphate + UTP + H(+) = UDP-N-acetyl-alpha-D-glucosamine + diphosphate</text>
        <dbReference type="Rhea" id="RHEA:13509"/>
        <dbReference type="ChEBI" id="CHEBI:15378"/>
        <dbReference type="ChEBI" id="CHEBI:33019"/>
        <dbReference type="ChEBI" id="CHEBI:46398"/>
        <dbReference type="ChEBI" id="CHEBI:57705"/>
        <dbReference type="ChEBI" id="CHEBI:57776"/>
        <dbReference type="EC" id="2.7.7.23"/>
    </reaction>
</comment>
<comment type="cofactor">
    <cofactor evidence="1">
        <name>Mg(2+)</name>
        <dbReference type="ChEBI" id="CHEBI:18420"/>
    </cofactor>
    <text evidence="1">Binds 1 Mg(2+) ion per subunit.</text>
</comment>
<comment type="pathway">
    <text evidence="1">Nucleotide-sugar biosynthesis; UDP-N-acetyl-alpha-D-glucosamine biosynthesis; N-acetyl-alpha-D-glucosamine 1-phosphate from alpha-D-glucosamine 6-phosphate (route II): step 2/2.</text>
</comment>
<comment type="pathway">
    <text evidence="1">Nucleotide-sugar biosynthesis; UDP-N-acetyl-alpha-D-glucosamine biosynthesis; UDP-N-acetyl-alpha-D-glucosamine from N-acetyl-alpha-D-glucosamine 1-phosphate: step 1/1.</text>
</comment>
<comment type="pathway">
    <text evidence="1">Bacterial outer membrane biogenesis; LPS lipid A biosynthesis.</text>
</comment>
<comment type="subunit">
    <text evidence="1">Homotrimer.</text>
</comment>
<comment type="subcellular location">
    <subcellularLocation>
        <location evidence="1">Cytoplasm</location>
    </subcellularLocation>
</comment>
<comment type="similarity">
    <text evidence="1">In the N-terminal section; belongs to the N-acetylglucosamine-1-phosphate uridyltransferase family.</text>
</comment>
<comment type="similarity">
    <text evidence="1">In the C-terminal section; belongs to the transferase hexapeptide repeat family.</text>
</comment>
<name>GLMU_SHEB8</name>